<name>SPR2E_HUMAN</name>
<reference key="1">
    <citation type="journal article" date="1988" name="Mol. Cell. Biol.">
        <title>Isolation, characterization, and UV-stimulated expression of two families of genes encoding polypeptides of related structure in human epidermal keratinocytes.</title>
        <authorList>
            <person name="Kartasova T."/>
            <person name="van de Putte P."/>
        </authorList>
    </citation>
    <scope>NUCLEOTIDE SEQUENCE [MRNA]</scope>
    <source>
        <tissue>Keratinocyte</tissue>
    </source>
</reference>
<reference key="2">
    <citation type="journal article" date="2001" name="J. Biol. Chem.">
        <title>Structural organization and regulation of the small proline-rich family of cornified envelope precursors suggest a role in adaptive barrier function.</title>
        <authorList>
            <person name="Cabral A."/>
            <person name="Voskamp P."/>
            <person name="Cleton-Jansen A.-M."/>
            <person name="South A."/>
            <person name="Nizetic D."/>
            <person name="Backendorf C."/>
        </authorList>
    </citation>
    <scope>NUCLEOTIDE SEQUENCE [GENOMIC DNA]</scope>
</reference>
<reference key="3">
    <citation type="journal article" date="2006" name="Nature">
        <title>The DNA sequence and biological annotation of human chromosome 1.</title>
        <authorList>
            <person name="Gregory S.G."/>
            <person name="Barlow K.F."/>
            <person name="McLay K.E."/>
            <person name="Kaul R."/>
            <person name="Swarbreck D."/>
            <person name="Dunham A."/>
            <person name="Scott C.E."/>
            <person name="Howe K.L."/>
            <person name="Woodfine K."/>
            <person name="Spencer C.C.A."/>
            <person name="Jones M.C."/>
            <person name="Gillson C."/>
            <person name="Searle S."/>
            <person name="Zhou Y."/>
            <person name="Kokocinski F."/>
            <person name="McDonald L."/>
            <person name="Evans R."/>
            <person name="Phillips K."/>
            <person name="Atkinson A."/>
            <person name="Cooper R."/>
            <person name="Jones C."/>
            <person name="Hall R.E."/>
            <person name="Andrews T.D."/>
            <person name="Lloyd C."/>
            <person name="Ainscough R."/>
            <person name="Almeida J.P."/>
            <person name="Ambrose K.D."/>
            <person name="Anderson F."/>
            <person name="Andrew R.W."/>
            <person name="Ashwell R.I.S."/>
            <person name="Aubin K."/>
            <person name="Babbage A.K."/>
            <person name="Bagguley C.L."/>
            <person name="Bailey J."/>
            <person name="Beasley H."/>
            <person name="Bethel G."/>
            <person name="Bird C.P."/>
            <person name="Bray-Allen S."/>
            <person name="Brown J.Y."/>
            <person name="Brown A.J."/>
            <person name="Buckley D."/>
            <person name="Burton J."/>
            <person name="Bye J."/>
            <person name="Carder C."/>
            <person name="Chapman J.C."/>
            <person name="Clark S.Y."/>
            <person name="Clarke G."/>
            <person name="Clee C."/>
            <person name="Cobley V."/>
            <person name="Collier R.E."/>
            <person name="Corby N."/>
            <person name="Coville G.J."/>
            <person name="Davies J."/>
            <person name="Deadman R."/>
            <person name="Dunn M."/>
            <person name="Earthrowl M."/>
            <person name="Ellington A.G."/>
            <person name="Errington H."/>
            <person name="Frankish A."/>
            <person name="Frankland J."/>
            <person name="French L."/>
            <person name="Garner P."/>
            <person name="Garnett J."/>
            <person name="Gay L."/>
            <person name="Ghori M.R.J."/>
            <person name="Gibson R."/>
            <person name="Gilby L.M."/>
            <person name="Gillett W."/>
            <person name="Glithero R.J."/>
            <person name="Grafham D.V."/>
            <person name="Griffiths C."/>
            <person name="Griffiths-Jones S."/>
            <person name="Grocock R."/>
            <person name="Hammond S."/>
            <person name="Harrison E.S.I."/>
            <person name="Hart E."/>
            <person name="Haugen E."/>
            <person name="Heath P.D."/>
            <person name="Holmes S."/>
            <person name="Holt K."/>
            <person name="Howden P.J."/>
            <person name="Hunt A.R."/>
            <person name="Hunt S.E."/>
            <person name="Hunter G."/>
            <person name="Isherwood J."/>
            <person name="James R."/>
            <person name="Johnson C."/>
            <person name="Johnson D."/>
            <person name="Joy A."/>
            <person name="Kay M."/>
            <person name="Kershaw J.K."/>
            <person name="Kibukawa M."/>
            <person name="Kimberley A.M."/>
            <person name="King A."/>
            <person name="Knights A.J."/>
            <person name="Lad H."/>
            <person name="Laird G."/>
            <person name="Lawlor S."/>
            <person name="Leongamornlert D.A."/>
            <person name="Lloyd D.M."/>
            <person name="Loveland J."/>
            <person name="Lovell J."/>
            <person name="Lush M.J."/>
            <person name="Lyne R."/>
            <person name="Martin S."/>
            <person name="Mashreghi-Mohammadi M."/>
            <person name="Matthews L."/>
            <person name="Matthews N.S.W."/>
            <person name="McLaren S."/>
            <person name="Milne S."/>
            <person name="Mistry S."/>
            <person name="Moore M.J.F."/>
            <person name="Nickerson T."/>
            <person name="O'Dell C.N."/>
            <person name="Oliver K."/>
            <person name="Palmeiri A."/>
            <person name="Palmer S.A."/>
            <person name="Parker A."/>
            <person name="Patel D."/>
            <person name="Pearce A.V."/>
            <person name="Peck A.I."/>
            <person name="Pelan S."/>
            <person name="Phelps K."/>
            <person name="Phillimore B.J."/>
            <person name="Plumb R."/>
            <person name="Rajan J."/>
            <person name="Raymond C."/>
            <person name="Rouse G."/>
            <person name="Saenphimmachak C."/>
            <person name="Sehra H.K."/>
            <person name="Sheridan E."/>
            <person name="Shownkeen R."/>
            <person name="Sims S."/>
            <person name="Skuce C.D."/>
            <person name="Smith M."/>
            <person name="Steward C."/>
            <person name="Subramanian S."/>
            <person name="Sycamore N."/>
            <person name="Tracey A."/>
            <person name="Tromans A."/>
            <person name="Van Helmond Z."/>
            <person name="Wall M."/>
            <person name="Wallis J.M."/>
            <person name="White S."/>
            <person name="Whitehead S.L."/>
            <person name="Wilkinson J.E."/>
            <person name="Willey D.L."/>
            <person name="Williams H."/>
            <person name="Wilming L."/>
            <person name="Wray P.W."/>
            <person name="Wu Z."/>
            <person name="Coulson A."/>
            <person name="Vaudin M."/>
            <person name="Sulston J.E."/>
            <person name="Durbin R.M."/>
            <person name="Hubbard T."/>
            <person name="Wooster R."/>
            <person name="Dunham I."/>
            <person name="Carter N.P."/>
            <person name="McVean G."/>
            <person name="Ross M.T."/>
            <person name="Harrow J."/>
            <person name="Olson M.V."/>
            <person name="Beck S."/>
            <person name="Rogers J."/>
            <person name="Bentley D.R."/>
        </authorList>
    </citation>
    <scope>NUCLEOTIDE SEQUENCE [LARGE SCALE GENOMIC DNA]</scope>
</reference>
<sequence>MSYQQQQCKQPCQPPPVCPTPKCPEPCPPPKCPEPCPPPKCPQPCPPQQCQQKCPPVTPSPPCQPKCPPKSK</sequence>
<gene>
    <name type="primary">SPRR2E</name>
</gene>
<dbReference type="EMBL" id="M20030">
    <property type="protein sequence ID" value="AAA36639.1"/>
    <property type="molecule type" value="mRNA"/>
</dbReference>
<dbReference type="EMBL" id="AF333955">
    <property type="protein sequence ID" value="AAK70942.1"/>
    <property type="molecule type" value="Genomic_DNA"/>
</dbReference>
<dbReference type="EMBL" id="AL139417">
    <property type="status" value="NOT_ANNOTATED_CDS"/>
    <property type="molecule type" value="Genomic_DNA"/>
</dbReference>
<dbReference type="CCDS" id="CCDS30866.1"/>
<dbReference type="PIR" id="B27725">
    <property type="entry name" value="B27725"/>
</dbReference>
<dbReference type="RefSeq" id="NP_001019380.2">
    <property type="nucleotide sequence ID" value="NM_001024209.4"/>
</dbReference>
<dbReference type="BioGRID" id="112582">
    <property type="interactions" value="35"/>
</dbReference>
<dbReference type="FunCoup" id="P22531">
    <property type="interactions" value="258"/>
</dbReference>
<dbReference type="IntAct" id="P22531">
    <property type="interactions" value="19"/>
</dbReference>
<dbReference type="MINT" id="P22531"/>
<dbReference type="STRING" id="9606.ENSP00000357740"/>
<dbReference type="GlyGen" id="P22531">
    <property type="glycosylation" value="3 sites, 1 O-linked glycan (1 site)"/>
</dbReference>
<dbReference type="iPTMnet" id="P22531"/>
<dbReference type="PhosphoSitePlus" id="P22531"/>
<dbReference type="BioMuta" id="SPRR2E"/>
<dbReference type="jPOST" id="P22531"/>
<dbReference type="MassIVE" id="P22531"/>
<dbReference type="PaxDb" id="9606-ENSP00000357740"/>
<dbReference type="PeptideAtlas" id="P22531"/>
<dbReference type="Pumba" id="P22531"/>
<dbReference type="Antibodypedia" id="76994">
    <property type="antibodies" value="2 antibodies from 2 providers"/>
</dbReference>
<dbReference type="DNASU" id="6704"/>
<dbReference type="Ensembl" id="ENST00000368750.8">
    <property type="protein sequence ID" value="ENSP00000357739.3"/>
    <property type="gene ID" value="ENSG00000203785.9"/>
</dbReference>
<dbReference type="Ensembl" id="ENST00000368751.1">
    <property type="protein sequence ID" value="ENSP00000357740.1"/>
    <property type="gene ID" value="ENSG00000203785.9"/>
</dbReference>
<dbReference type="GeneID" id="6704"/>
<dbReference type="KEGG" id="hsa:6704"/>
<dbReference type="MANE-Select" id="ENST00000368750.8">
    <property type="protein sequence ID" value="ENSP00000357739.3"/>
    <property type="RefSeq nucleotide sequence ID" value="NM_001024209.4"/>
    <property type="RefSeq protein sequence ID" value="NP_001019380.2"/>
</dbReference>
<dbReference type="UCSC" id="uc001fbh.3">
    <property type="organism name" value="human"/>
</dbReference>
<dbReference type="AGR" id="HGNC:11265"/>
<dbReference type="CTD" id="6704"/>
<dbReference type="DisGeNET" id="6704"/>
<dbReference type="GeneCards" id="SPRR2E"/>
<dbReference type="HGNC" id="HGNC:11265">
    <property type="gene designation" value="SPRR2E"/>
</dbReference>
<dbReference type="HPA" id="ENSG00000203785">
    <property type="expression patterns" value="Tissue enhanced (esophagus, skin)"/>
</dbReference>
<dbReference type="MIM" id="617588">
    <property type="type" value="gene"/>
</dbReference>
<dbReference type="neXtProt" id="NX_P22531"/>
<dbReference type="OpenTargets" id="ENSG00000203785"/>
<dbReference type="PharmGKB" id="PA36094"/>
<dbReference type="VEuPathDB" id="HostDB:ENSG00000203785"/>
<dbReference type="eggNOG" id="ENOG502TF4G">
    <property type="taxonomic scope" value="Eukaryota"/>
</dbReference>
<dbReference type="GeneTree" id="ENSGT00940000163622"/>
<dbReference type="HOGENOM" id="CLU_192372_0_0_1"/>
<dbReference type="InParanoid" id="P22531"/>
<dbReference type="OMA" id="PPVKCPQ"/>
<dbReference type="PAN-GO" id="P22531">
    <property type="GO annotations" value="2 GO annotations based on evolutionary models"/>
</dbReference>
<dbReference type="PathwayCommons" id="P22531"/>
<dbReference type="Reactome" id="R-HSA-6809371">
    <property type="pathway name" value="Formation of the cornified envelope"/>
</dbReference>
<dbReference type="SignaLink" id="P22531"/>
<dbReference type="BioGRID-ORCS" id="6704">
    <property type="hits" value="12 hits in 635 CRISPR screens"/>
</dbReference>
<dbReference type="ChiTaRS" id="SPRR2E">
    <property type="organism name" value="human"/>
</dbReference>
<dbReference type="GenomeRNAi" id="6704"/>
<dbReference type="Pharos" id="P22531">
    <property type="development level" value="Tdark"/>
</dbReference>
<dbReference type="PRO" id="PR:P22531"/>
<dbReference type="Proteomes" id="UP000005640">
    <property type="component" value="Chromosome 1"/>
</dbReference>
<dbReference type="RNAct" id="P22531">
    <property type="molecule type" value="protein"/>
</dbReference>
<dbReference type="Bgee" id="ENSG00000203785">
    <property type="expression patterns" value="Expressed in lower esophagus mucosa and 79 other cell types or tissues"/>
</dbReference>
<dbReference type="GO" id="GO:0001533">
    <property type="term" value="C:cornified envelope"/>
    <property type="evidence" value="ECO:0000314"/>
    <property type="project" value="CAFA"/>
</dbReference>
<dbReference type="GO" id="GO:0005737">
    <property type="term" value="C:cytoplasm"/>
    <property type="evidence" value="ECO:0000314"/>
    <property type="project" value="UniProtKB"/>
</dbReference>
<dbReference type="GO" id="GO:0005829">
    <property type="term" value="C:cytosol"/>
    <property type="evidence" value="ECO:0000304"/>
    <property type="project" value="Reactome"/>
</dbReference>
<dbReference type="GO" id="GO:0030280">
    <property type="term" value="F:structural constituent of skin epidermis"/>
    <property type="evidence" value="ECO:0000314"/>
    <property type="project" value="CAFA"/>
</dbReference>
<dbReference type="GO" id="GO:0005198">
    <property type="term" value="F:structural molecule activity"/>
    <property type="evidence" value="ECO:0000304"/>
    <property type="project" value="UniProtKB"/>
</dbReference>
<dbReference type="GO" id="GO:0008544">
    <property type="term" value="P:epidermis development"/>
    <property type="evidence" value="ECO:0000303"/>
    <property type="project" value="UniProtKB"/>
</dbReference>
<dbReference type="GO" id="GO:0031424">
    <property type="term" value="P:keratinization"/>
    <property type="evidence" value="ECO:0007669"/>
    <property type="project" value="UniProtKB-KW"/>
</dbReference>
<dbReference type="GO" id="GO:0018149">
    <property type="term" value="P:peptide cross-linking"/>
    <property type="evidence" value="ECO:0000314"/>
    <property type="project" value="CAFA"/>
</dbReference>
<dbReference type="InterPro" id="IPR029142">
    <property type="entry name" value="SPRR2"/>
</dbReference>
<dbReference type="Pfam" id="PF14820">
    <property type="entry name" value="SPRR2"/>
    <property type="match status" value="1"/>
</dbReference>
<dbReference type="PRINTS" id="PR01217">
    <property type="entry name" value="PRICHEXTENSN"/>
</dbReference>
<dbReference type="PRINTS" id="PR00021">
    <property type="entry name" value="PRORICH"/>
</dbReference>
<accession>P22531</accession>
<accession>Q5T9T4</accession>
<accession>Q96RM2</accession>
<protein>
    <recommendedName>
        <fullName>Small proline-rich protein 2E</fullName>
        <shortName>SPR-2E</shortName>
    </recommendedName>
    <alternativeName>
        <fullName>Small proline-rich protein II</fullName>
        <shortName>SPR-II</shortName>
    </alternativeName>
</protein>
<organism>
    <name type="scientific">Homo sapiens</name>
    <name type="common">Human</name>
    <dbReference type="NCBI Taxonomy" id="9606"/>
    <lineage>
        <taxon>Eukaryota</taxon>
        <taxon>Metazoa</taxon>
        <taxon>Chordata</taxon>
        <taxon>Craniata</taxon>
        <taxon>Vertebrata</taxon>
        <taxon>Euteleostomi</taxon>
        <taxon>Mammalia</taxon>
        <taxon>Eutheria</taxon>
        <taxon>Euarchontoglires</taxon>
        <taxon>Primates</taxon>
        <taxon>Haplorrhini</taxon>
        <taxon>Catarrhini</taxon>
        <taxon>Hominidae</taxon>
        <taxon>Homo</taxon>
    </lineage>
</organism>
<feature type="chain" id="PRO_0000150011" description="Small proline-rich protein 2E">
    <location>
        <begin position="1"/>
        <end position="72"/>
    </location>
</feature>
<feature type="repeat" description="1">
    <location>
        <begin position="21"/>
        <end position="29"/>
    </location>
</feature>
<feature type="repeat" description="2">
    <location>
        <begin position="30"/>
        <end position="38"/>
    </location>
</feature>
<feature type="repeat" description="3">
    <location>
        <begin position="39"/>
        <end position="47"/>
    </location>
</feature>
<feature type="region of interest" description="Disordered" evidence="1">
    <location>
        <begin position="1"/>
        <end position="20"/>
    </location>
</feature>
<feature type="region of interest" description="3 X 9 AA tandem repeats of P-K-C-P-[EQ]-P-C-P-P">
    <location>
        <begin position="21"/>
        <end position="47"/>
    </location>
</feature>
<feature type="region of interest" description="Disordered" evidence="1">
    <location>
        <begin position="42"/>
        <end position="72"/>
    </location>
</feature>
<feature type="compositionally biased region" description="Low complexity" evidence="1">
    <location>
        <begin position="1"/>
        <end position="11"/>
    </location>
</feature>
<feature type="compositionally biased region" description="Pro residues" evidence="1">
    <location>
        <begin position="56"/>
        <end position="72"/>
    </location>
</feature>
<feature type="sequence conflict" description="In Ref. 1; AAA36639." evidence="2" ref="1">
    <original>C</original>
    <variation>S</variation>
    <location>
        <position position="45"/>
    </location>
</feature>
<proteinExistence type="evidence at transcript level"/>
<comment type="function">
    <text>Cross-linked envelope protein of keratinocytes. It is a keratinocyte protein that first appears in the cell cytosol, but ultimately becomes cross-linked to membrane proteins by transglutaminase. All that results in the formation of an insoluble envelope beneath the plasma membrane.</text>
</comment>
<comment type="subcellular location">
    <subcellularLocation>
        <location>Cytoplasm</location>
    </subcellularLocation>
</comment>
<comment type="induction">
    <text>During squamous differentiation of epidermal keratinocytes.</text>
</comment>
<comment type="similarity">
    <text evidence="2">Belongs to the cornifin (SPRR) family.</text>
</comment>
<keyword id="KW-0963">Cytoplasm</keyword>
<keyword id="KW-0417">Keratinization</keyword>
<keyword id="KW-1185">Reference proteome</keyword>
<keyword id="KW-0677">Repeat</keyword>
<evidence type="ECO:0000256" key="1">
    <source>
        <dbReference type="SAM" id="MobiDB-lite"/>
    </source>
</evidence>
<evidence type="ECO:0000305" key="2"/>